<proteinExistence type="evidence at protein level"/>
<accession>Q836X6</accession>
<evidence type="ECO:0000255" key="1">
    <source>
        <dbReference type="HAMAP-Rule" id="MF_01363"/>
    </source>
</evidence>
<evidence type="ECO:0000305" key="2"/>
<evidence type="ECO:0007829" key="3">
    <source>
        <dbReference type="PDB" id="6WU9"/>
    </source>
</evidence>
<name>RL21_ENTFA</name>
<protein>
    <recommendedName>
        <fullName evidence="1">Large ribosomal subunit protein bL21</fullName>
    </recommendedName>
    <alternativeName>
        <fullName evidence="2">50S ribosomal protein L21</fullName>
    </alternativeName>
</protein>
<feature type="chain" id="PRO_0000269315" description="Large ribosomal subunit protein bL21">
    <location>
        <begin position="1"/>
        <end position="102"/>
    </location>
</feature>
<feature type="strand" evidence="3">
    <location>
        <begin position="3"/>
        <end position="7"/>
    </location>
</feature>
<feature type="strand" evidence="3">
    <location>
        <begin position="10"/>
        <end position="14"/>
    </location>
</feature>
<feature type="strand" evidence="3">
    <location>
        <begin position="19"/>
        <end position="23"/>
    </location>
</feature>
<feature type="strand" evidence="3">
    <location>
        <begin position="32"/>
        <end position="35"/>
    </location>
</feature>
<feature type="strand" evidence="3">
    <location>
        <begin position="38"/>
        <end position="41"/>
    </location>
</feature>
<feature type="strand" evidence="3">
    <location>
        <begin position="43"/>
        <end position="45"/>
    </location>
</feature>
<feature type="strand" evidence="3">
    <location>
        <begin position="50"/>
        <end position="52"/>
    </location>
</feature>
<feature type="strand" evidence="3">
    <location>
        <begin position="58"/>
        <end position="67"/>
    </location>
</feature>
<feature type="strand" evidence="3">
    <location>
        <begin position="71"/>
        <end position="76"/>
    </location>
</feature>
<feature type="strand" evidence="3">
    <location>
        <begin position="83"/>
        <end position="88"/>
    </location>
</feature>
<feature type="strand" evidence="3">
    <location>
        <begin position="91"/>
        <end position="100"/>
    </location>
</feature>
<organism>
    <name type="scientific">Enterococcus faecalis (strain ATCC 700802 / V583)</name>
    <dbReference type="NCBI Taxonomy" id="226185"/>
    <lineage>
        <taxon>Bacteria</taxon>
        <taxon>Bacillati</taxon>
        <taxon>Bacillota</taxon>
        <taxon>Bacilli</taxon>
        <taxon>Lactobacillales</taxon>
        <taxon>Enterococcaceae</taxon>
        <taxon>Enterococcus</taxon>
    </lineage>
</organism>
<sequence length="102" mass="11146">MYAIIKTGGKQVKVEVGQAIYVEKLNVEAGEKVVFDEVILVGGESTKVGAPTVAGATVEGTVEKHGKQKKVVTFQYKPKKHSHRKQGHRQPYTKVMIEAINA</sequence>
<comment type="function">
    <text evidence="1">This protein binds to 23S rRNA in the presence of protein L20.</text>
</comment>
<comment type="subunit">
    <text evidence="1">Part of the 50S ribosomal subunit. Contacts protein L20.</text>
</comment>
<comment type="similarity">
    <text evidence="1">Belongs to the bacterial ribosomal protein bL21 family.</text>
</comment>
<gene>
    <name evidence="1" type="primary">rplU</name>
    <name type="ordered locus">EF_0968</name>
</gene>
<keyword id="KW-0002">3D-structure</keyword>
<keyword id="KW-1185">Reference proteome</keyword>
<keyword id="KW-0687">Ribonucleoprotein</keyword>
<keyword id="KW-0689">Ribosomal protein</keyword>
<keyword id="KW-0694">RNA-binding</keyword>
<keyword id="KW-0699">rRNA-binding</keyword>
<reference key="1">
    <citation type="journal article" date="2003" name="Science">
        <title>Role of mobile DNA in the evolution of vancomycin-resistant Enterococcus faecalis.</title>
        <authorList>
            <person name="Paulsen I.T."/>
            <person name="Banerjei L."/>
            <person name="Myers G.S.A."/>
            <person name="Nelson K.E."/>
            <person name="Seshadri R."/>
            <person name="Read T.D."/>
            <person name="Fouts D.E."/>
            <person name="Eisen J.A."/>
            <person name="Gill S.R."/>
            <person name="Heidelberg J.F."/>
            <person name="Tettelin H."/>
            <person name="Dodson R.J."/>
            <person name="Umayam L.A."/>
            <person name="Brinkac L.M."/>
            <person name="Beanan M.J."/>
            <person name="Daugherty S.C."/>
            <person name="DeBoy R.T."/>
            <person name="Durkin S.A."/>
            <person name="Kolonay J.F."/>
            <person name="Madupu R."/>
            <person name="Nelson W.C."/>
            <person name="Vamathevan J.J."/>
            <person name="Tran B."/>
            <person name="Upton J."/>
            <person name="Hansen T."/>
            <person name="Shetty J."/>
            <person name="Khouri H.M."/>
            <person name="Utterback T.R."/>
            <person name="Radune D."/>
            <person name="Ketchum K.A."/>
            <person name="Dougherty B.A."/>
            <person name="Fraser C.M."/>
        </authorList>
    </citation>
    <scope>NUCLEOTIDE SEQUENCE [LARGE SCALE GENOMIC DNA]</scope>
    <source>
        <strain>ATCC 700802 / V583</strain>
    </source>
</reference>
<dbReference type="EMBL" id="AE016830">
    <property type="protein sequence ID" value="AAO80775.1"/>
    <property type="molecule type" value="Genomic_DNA"/>
</dbReference>
<dbReference type="RefSeq" id="NP_814705.1">
    <property type="nucleotide sequence ID" value="NC_004668.1"/>
</dbReference>
<dbReference type="RefSeq" id="WP_002355866.1">
    <property type="nucleotide sequence ID" value="NZ_KE136527.1"/>
</dbReference>
<dbReference type="PDB" id="6WU9">
    <property type="method" value="EM"/>
    <property type="resolution" value="2.90 A"/>
    <property type="chains" value="S=1-102"/>
</dbReference>
<dbReference type="PDB" id="7P7Q">
    <property type="method" value="EM"/>
    <property type="resolution" value="2.40 A"/>
    <property type="chains" value="U=1-102"/>
</dbReference>
<dbReference type="PDB" id="7P7R">
    <property type="method" value="EM"/>
    <property type="resolution" value="2.90 A"/>
    <property type="chains" value="U=1-102"/>
</dbReference>
<dbReference type="PDBsum" id="6WU9"/>
<dbReference type="PDBsum" id="7P7Q"/>
<dbReference type="PDBsum" id="7P7R"/>
<dbReference type="EMDB" id="EMD-13241"/>
<dbReference type="EMDB" id="EMD-13242"/>
<dbReference type="SMR" id="Q836X6"/>
<dbReference type="STRING" id="226185.EF_0968"/>
<dbReference type="EnsemblBacteria" id="AAO80775">
    <property type="protein sequence ID" value="AAO80775"/>
    <property type="gene ID" value="EF_0968"/>
</dbReference>
<dbReference type="GeneID" id="60893303"/>
<dbReference type="KEGG" id="efa:EF0968"/>
<dbReference type="PATRIC" id="fig|226185.45.peg.3175"/>
<dbReference type="eggNOG" id="COG0261">
    <property type="taxonomic scope" value="Bacteria"/>
</dbReference>
<dbReference type="HOGENOM" id="CLU_061463_3_1_9"/>
<dbReference type="Proteomes" id="UP000001415">
    <property type="component" value="Chromosome"/>
</dbReference>
<dbReference type="GO" id="GO:0005737">
    <property type="term" value="C:cytoplasm"/>
    <property type="evidence" value="ECO:0007669"/>
    <property type="project" value="UniProtKB-ARBA"/>
</dbReference>
<dbReference type="GO" id="GO:1990904">
    <property type="term" value="C:ribonucleoprotein complex"/>
    <property type="evidence" value="ECO:0007669"/>
    <property type="project" value="UniProtKB-KW"/>
</dbReference>
<dbReference type="GO" id="GO:0005840">
    <property type="term" value="C:ribosome"/>
    <property type="evidence" value="ECO:0007669"/>
    <property type="project" value="UniProtKB-KW"/>
</dbReference>
<dbReference type="GO" id="GO:0019843">
    <property type="term" value="F:rRNA binding"/>
    <property type="evidence" value="ECO:0007669"/>
    <property type="project" value="UniProtKB-UniRule"/>
</dbReference>
<dbReference type="GO" id="GO:0003735">
    <property type="term" value="F:structural constituent of ribosome"/>
    <property type="evidence" value="ECO:0007669"/>
    <property type="project" value="InterPro"/>
</dbReference>
<dbReference type="GO" id="GO:0006412">
    <property type="term" value="P:translation"/>
    <property type="evidence" value="ECO:0007669"/>
    <property type="project" value="UniProtKB-UniRule"/>
</dbReference>
<dbReference type="HAMAP" id="MF_01363">
    <property type="entry name" value="Ribosomal_bL21"/>
    <property type="match status" value="1"/>
</dbReference>
<dbReference type="InterPro" id="IPR028909">
    <property type="entry name" value="bL21-like"/>
</dbReference>
<dbReference type="InterPro" id="IPR036164">
    <property type="entry name" value="bL21-like_sf"/>
</dbReference>
<dbReference type="InterPro" id="IPR001787">
    <property type="entry name" value="Ribosomal_bL21"/>
</dbReference>
<dbReference type="NCBIfam" id="TIGR00061">
    <property type="entry name" value="L21"/>
    <property type="match status" value="1"/>
</dbReference>
<dbReference type="PANTHER" id="PTHR21349">
    <property type="entry name" value="50S RIBOSOMAL PROTEIN L21"/>
    <property type="match status" value="1"/>
</dbReference>
<dbReference type="PANTHER" id="PTHR21349:SF0">
    <property type="entry name" value="LARGE RIBOSOMAL SUBUNIT PROTEIN BL21M"/>
    <property type="match status" value="1"/>
</dbReference>
<dbReference type="Pfam" id="PF00829">
    <property type="entry name" value="Ribosomal_L21p"/>
    <property type="match status" value="1"/>
</dbReference>
<dbReference type="SUPFAM" id="SSF141091">
    <property type="entry name" value="L21p-like"/>
    <property type="match status" value="1"/>
</dbReference>